<name>ATPG_SHEDO</name>
<feature type="chain" id="PRO_1000053327" description="ATP synthase gamma chain">
    <location>
        <begin position="1"/>
        <end position="286"/>
    </location>
</feature>
<accession>Q12HQ0</accession>
<dbReference type="EMBL" id="CP000302">
    <property type="protein sequence ID" value="ABE57026.1"/>
    <property type="molecule type" value="Genomic_DNA"/>
</dbReference>
<dbReference type="RefSeq" id="WP_011498164.1">
    <property type="nucleotide sequence ID" value="NC_007954.1"/>
</dbReference>
<dbReference type="SMR" id="Q12HQ0"/>
<dbReference type="STRING" id="318161.Sden_3753"/>
<dbReference type="KEGG" id="sdn:Sden_3753"/>
<dbReference type="eggNOG" id="COG0224">
    <property type="taxonomic scope" value="Bacteria"/>
</dbReference>
<dbReference type="HOGENOM" id="CLU_050669_0_1_6"/>
<dbReference type="OrthoDB" id="9812769at2"/>
<dbReference type="Proteomes" id="UP000001982">
    <property type="component" value="Chromosome"/>
</dbReference>
<dbReference type="GO" id="GO:0005886">
    <property type="term" value="C:plasma membrane"/>
    <property type="evidence" value="ECO:0007669"/>
    <property type="project" value="UniProtKB-SubCell"/>
</dbReference>
<dbReference type="GO" id="GO:0045259">
    <property type="term" value="C:proton-transporting ATP synthase complex"/>
    <property type="evidence" value="ECO:0007669"/>
    <property type="project" value="UniProtKB-KW"/>
</dbReference>
<dbReference type="GO" id="GO:0005524">
    <property type="term" value="F:ATP binding"/>
    <property type="evidence" value="ECO:0007669"/>
    <property type="project" value="UniProtKB-UniRule"/>
</dbReference>
<dbReference type="GO" id="GO:0046933">
    <property type="term" value="F:proton-transporting ATP synthase activity, rotational mechanism"/>
    <property type="evidence" value="ECO:0007669"/>
    <property type="project" value="UniProtKB-UniRule"/>
</dbReference>
<dbReference type="GO" id="GO:0042777">
    <property type="term" value="P:proton motive force-driven plasma membrane ATP synthesis"/>
    <property type="evidence" value="ECO:0007669"/>
    <property type="project" value="UniProtKB-UniRule"/>
</dbReference>
<dbReference type="CDD" id="cd12151">
    <property type="entry name" value="F1-ATPase_gamma"/>
    <property type="match status" value="1"/>
</dbReference>
<dbReference type="FunFam" id="1.10.287.80:FF:000005">
    <property type="entry name" value="ATP synthase gamma chain"/>
    <property type="match status" value="2"/>
</dbReference>
<dbReference type="FunFam" id="3.40.1380.10:FF:000001">
    <property type="entry name" value="ATP synthase gamma chain"/>
    <property type="match status" value="1"/>
</dbReference>
<dbReference type="Gene3D" id="3.40.1380.10">
    <property type="match status" value="1"/>
</dbReference>
<dbReference type="Gene3D" id="1.10.287.80">
    <property type="entry name" value="ATP synthase, gamma subunit, helix hairpin domain"/>
    <property type="match status" value="1"/>
</dbReference>
<dbReference type="HAMAP" id="MF_00815">
    <property type="entry name" value="ATP_synth_gamma_bact"/>
    <property type="match status" value="1"/>
</dbReference>
<dbReference type="InterPro" id="IPR035968">
    <property type="entry name" value="ATP_synth_F1_ATPase_gsu"/>
</dbReference>
<dbReference type="InterPro" id="IPR000131">
    <property type="entry name" value="ATP_synth_F1_gsu"/>
</dbReference>
<dbReference type="InterPro" id="IPR023632">
    <property type="entry name" value="ATP_synth_F1_gsu_CS"/>
</dbReference>
<dbReference type="NCBIfam" id="TIGR01146">
    <property type="entry name" value="ATPsyn_F1gamma"/>
    <property type="match status" value="1"/>
</dbReference>
<dbReference type="NCBIfam" id="NF004144">
    <property type="entry name" value="PRK05621.1-1"/>
    <property type="match status" value="1"/>
</dbReference>
<dbReference type="PANTHER" id="PTHR11693">
    <property type="entry name" value="ATP SYNTHASE GAMMA CHAIN"/>
    <property type="match status" value="1"/>
</dbReference>
<dbReference type="PANTHER" id="PTHR11693:SF22">
    <property type="entry name" value="ATP SYNTHASE SUBUNIT GAMMA, MITOCHONDRIAL"/>
    <property type="match status" value="1"/>
</dbReference>
<dbReference type="Pfam" id="PF00231">
    <property type="entry name" value="ATP-synt"/>
    <property type="match status" value="1"/>
</dbReference>
<dbReference type="PRINTS" id="PR00126">
    <property type="entry name" value="ATPASEGAMMA"/>
</dbReference>
<dbReference type="SUPFAM" id="SSF52943">
    <property type="entry name" value="ATP synthase (F1-ATPase), gamma subunit"/>
    <property type="match status" value="1"/>
</dbReference>
<dbReference type="PROSITE" id="PS00153">
    <property type="entry name" value="ATPASE_GAMMA"/>
    <property type="match status" value="1"/>
</dbReference>
<evidence type="ECO:0000255" key="1">
    <source>
        <dbReference type="HAMAP-Rule" id="MF_00815"/>
    </source>
</evidence>
<reference key="1">
    <citation type="submission" date="2006-03" db="EMBL/GenBank/DDBJ databases">
        <title>Complete sequence of Shewanella denitrificans OS217.</title>
        <authorList>
            <consortium name="US DOE Joint Genome Institute"/>
            <person name="Copeland A."/>
            <person name="Lucas S."/>
            <person name="Lapidus A."/>
            <person name="Barry K."/>
            <person name="Detter J.C."/>
            <person name="Glavina del Rio T."/>
            <person name="Hammon N."/>
            <person name="Israni S."/>
            <person name="Dalin E."/>
            <person name="Tice H."/>
            <person name="Pitluck S."/>
            <person name="Brettin T."/>
            <person name="Bruce D."/>
            <person name="Han C."/>
            <person name="Tapia R."/>
            <person name="Gilna P."/>
            <person name="Kiss H."/>
            <person name="Schmutz J."/>
            <person name="Larimer F."/>
            <person name="Land M."/>
            <person name="Hauser L."/>
            <person name="Kyrpides N."/>
            <person name="Lykidis A."/>
            <person name="Richardson P."/>
        </authorList>
    </citation>
    <scope>NUCLEOTIDE SEQUENCE [LARGE SCALE GENOMIC DNA]</scope>
    <source>
        <strain>OS217 / ATCC BAA-1090 / DSM 15013</strain>
    </source>
</reference>
<sequence>MAGAKEIKTKIASVKNTQKITSAMEMVAASKMRRAQERMAASRPYAESMRKVIGHVAQGSLEFKHPYLEVREAKRVGYIVVATDRGLCGGLNVNLFKKVTLDVKNWKAQGAEVEFCPIGARSVQFFKSFGGQVSAHASGLGDAPKLADLIGTVRVMLQAYNEGKLDRLYVVFNKFVNTMAQTPVIEQLLPLPKSADDVKTNRWDYIYEPDPKEILETLLVRYVESQVYQGVIENLASEQAARMVAMKAATDNAGDMIDGLQLVYNKARQAAITQELSEIVSGASAV</sequence>
<protein>
    <recommendedName>
        <fullName evidence="1">ATP synthase gamma chain</fullName>
    </recommendedName>
    <alternativeName>
        <fullName evidence="1">ATP synthase F1 sector gamma subunit</fullName>
    </alternativeName>
    <alternativeName>
        <fullName evidence="1">F-ATPase gamma subunit</fullName>
    </alternativeName>
</protein>
<keyword id="KW-0066">ATP synthesis</keyword>
<keyword id="KW-0997">Cell inner membrane</keyword>
<keyword id="KW-1003">Cell membrane</keyword>
<keyword id="KW-0139">CF(1)</keyword>
<keyword id="KW-0375">Hydrogen ion transport</keyword>
<keyword id="KW-0406">Ion transport</keyword>
<keyword id="KW-0472">Membrane</keyword>
<keyword id="KW-1185">Reference proteome</keyword>
<keyword id="KW-0813">Transport</keyword>
<proteinExistence type="inferred from homology"/>
<gene>
    <name evidence="1" type="primary">atpG</name>
    <name type="ordered locus">Sden_3753</name>
</gene>
<organism>
    <name type="scientific">Shewanella denitrificans (strain OS217 / ATCC BAA-1090 / DSM 15013)</name>
    <dbReference type="NCBI Taxonomy" id="318161"/>
    <lineage>
        <taxon>Bacteria</taxon>
        <taxon>Pseudomonadati</taxon>
        <taxon>Pseudomonadota</taxon>
        <taxon>Gammaproteobacteria</taxon>
        <taxon>Alteromonadales</taxon>
        <taxon>Shewanellaceae</taxon>
        <taxon>Shewanella</taxon>
    </lineage>
</organism>
<comment type="function">
    <text evidence="1">Produces ATP from ADP in the presence of a proton gradient across the membrane. The gamma chain is believed to be important in regulating ATPase activity and the flow of protons through the CF(0) complex.</text>
</comment>
<comment type="subunit">
    <text evidence="1">F-type ATPases have 2 components, CF(1) - the catalytic core - and CF(0) - the membrane proton channel. CF(1) has five subunits: alpha(3), beta(3), gamma(1), delta(1), epsilon(1). CF(0) has three main subunits: a, b and c.</text>
</comment>
<comment type="subcellular location">
    <subcellularLocation>
        <location evidence="1">Cell inner membrane</location>
        <topology evidence="1">Peripheral membrane protein</topology>
    </subcellularLocation>
</comment>
<comment type="similarity">
    <text evidence="1">Belongs to the ATPase gamma chain family.</text>
</comment>